<sequence>MAEQYADKQIKLFSLTANREIAEKISQASGIPLGKMSSRQFSDGEIMINIEETVRGDDIYIIQSTSFPVNDNLWELLIMIDACKRASANTVNIVVPYFGYSRQDRIAASREPITAKLVANMLVKAGVDRVLTLDLHAVQVQGFFDIPVDNLFTVPLFAEHYNQLGLSGEDVVVVSPKNSGIKRARSLAEYLDSPIAIIDYAQDDSEREEGYIIGEVEGKKAIIIDDILNTGKTFAEAAKILERGGATEIYAVASHGLFAGGAADILESAPIREIIVTDSVLSKERIPSNIKYLTASHLIADAIIRIHERKPLSPLFSYRSDKKD</sequence>
<accession>Q8DZK4</accession>
<dbReference type="EC" id="2.7.6.1" evidence="1"/>
<dbReference type="EMBL" id="AE009948">
    <property type="protein sequence ID" value="AAM99978.1"/>
    <property type="molecule type" value="Genomic_DNA"/>
</dbReference>
<dbReference type="RefSeq" id="NP_688106.1">
    <property type="nucleotide sequence ID" value="NC_004116.1"/>
</dbReference>
<dbReference type="RefSeq" id="WP_000840698.1">
    <property type="nucleotide sequence ID" value="NC_004116.1"/>
</dbReference>
<dbReference type="SMR" id="Q8DZK4"/>
<dbReference type="STRING" id="208435.SAG1097"/>
<dbReference type="KEGG" id="sag:SAG1097"/>
<dbReference type="PATRIC" id="fig|208435.3.peg.1105"/>
<dbReference type="HOGENOM" id="CLU_033546_2_0_9"/>
<dbReference type="OrthoDB" id="9777067at2"/>
<dbReference type="UniPathway" id="UPA00087">
    <property type="reaction ID" value="UER00172"/>
</dbReference>
<dbReference type="Proteomes" id="UP000000821">
    <property type="component" value="Chromosome"/>
</dbReference>
<dbReference type="GO" id="GO:0005737">
    <property type="term" value="C:cytoplasm"/>
    <property type="evidence" value="ECO:0007669"/>
    <property type="project" value="UniProtKB-SubCell"/>
</dbReference>
<dbReference type="GO" id="GO:0002189">
    <property type="term" value="C:ribose phosphate diphosphokinase complex"/>
    <property type="evidence" value="ECO:0007669"/>
    <property type="project" value="TreeGrafter"/>
</dbReference>
<dbReference type="GO" id="GO:0005524">
    <property type="term" value="F:ATP binding"/>
    <property type="evidence" value="ECO:0007669"/>
    <property type="project" value="UniProtKB-KW"/>
</dbReference>
<dbReference type="GO" id="GO:0016301">
    <property type="term" value="F:kinase activity"/>
    <property type="evidence" value="ECO:0007669"/>
    <property type="project" value="UniProtKB-KW"/>
</dbReference>
<dbReference type="GO" id="GO:0000287">
    <property type="term" value="F:magnesium ion binding"/>
    <property type="evidence" value="ECO:0007669"/>
    <property type="project" value="UniProtKB-UniRule"/>
</dbReference>
<dbReference type="GO" id="GO:0004749">
    <property type="term" value="F:ribose phosphate diphosphokinase activity"/>
    <property type="evidence" value="ECO:0007669"/>
    <property type="project" value="UniProtKB-UniRule"/>
</dbReference>
<dbReference type="GO" id="GO:0006015">
    <property type="term" value="P:5-phosphoribose 1-diphosphate biosynthetic process"/>
    <property type="evidence" value="ECO:0007669"/>
    <property type="project" value="UniProtKB-UniRule"/>
</dbReference>
<dbReference type="GO" id="GO:0006164">
    <property type="term" value="P:purine nucleotide biosynthetic process"/>
    <property type="evidence" value="ECO:0007669"/>
    <property type="project" value="TreeGrafter"/>
</dbReference>
<dbReference type="GO" id="GO:0009156">
    <property type="term" value="P:ribonucleoside monophosphate biosynthetic process"/>
    <property type="evidence" value="ECO:0007669"/>
    <property type="project" value="InterPro"/>
</dbReference>
<dbReference type="CDD" id="cd06223">
    <property type="entry name" value="PRTases_typeI"/>
    <property type="match status" value="1"/>
</dbReference>
<dbReference type="FunFam" id="3.40.50.2020:FF:000001">
    <property type="entry name" value="Ribose-phosphate pyrophosphokinase"/>
    <property type="match status" value="1"/>
</dbReference>
<dbReference type="Gene3D" id="3.40.50.2020">
    <property type="match status" value="2"/>
</dbReference>
<dbReference type="HAMAP" id="MF_00583_B">
    <property type="entry name" value="RibP_PPkinase_B"/>
    <property type="match status" value="1"/>
</dbReference>
<dbReference type="InterPro" id="IPR000842">
    <property type="entry name" value="PRib_PP_synth_CS"/>
</dbReference>
<dbReference type="InterPro" id="IPR029099">
    <property type="entry name" value="Pribosyltran_N"/>
</dbReference>
<dbReference type="InterPro" id="IPR000836">
    <property type="entry name" value="PRibTrfase_dom"/>
</dbReference>
<dbReference type="InterPro" id="IPR029057">
    <property type="entry name" value="PRTase-like"/>
</dbReference>
<dbReference type="InterPro" id="IPR005946">
    <property type="entry name" value="Rib-P_diPkinase"/>
</dbReference>
<dbReference type="InterPro" id="IPR037515">
    <property type="entry name" value="Rib-P_diPkinase_bac"/>
</dbReference>
<dbReference type="NCBIfam" id="NF002320">
    <property type="entry name" value="PRK01259.1"/>
    <property type="match status" value="1"/>
</dbReference>
<dbReference type="NCBIfam" id="NF002686">
    <property type="entry name" value="PRK02458.1"/>
    <property type="match status" value="1"/>
</dbReference>
<dbReference type="NCBIfam" id="TIGR01251">
    <property type="entry name" value="ribP_PPkin"/>
    <property type="match status" value="1"/>
</dbReference>
<dbReference type="PANTHER" id="PTHR10210">
    <property type="entry name" value="RIBOSE-PHOSPHATE DIPHOSPHOKINASE FAMILY MEMBER"/>
    <property type="match status" value="1"/>
</dbReference>
<dbReference type="PANTHER" id="PTHR10210:SF41">
    <property type="entry name" value="RIBOSE-PHOSPHATE PYROPHOSPHOKINASE 1, CHLOROPLASTIC"/>
    <property type="match status" value="1"/>
</dbReference>
<dbReference type="Pfam" id="PF14572">
    <property type="entry name" value="Pribosyl_synth"/>
    <property type="match status" value="1"/>
</dbReference>
<dbReference type="Pfam" id="PF13793">
    <property type="entry name" value="Pribosyltran_N"/>
    <property type="match status" value="1"/>
</dbReference>
<dbReference type="SMART" id="SM01400">
    <property type="entry name" value="Pribosyltran_N"/>
    <property type="match status" value="1"/>
</dbReference>
<dbReference type="SUPFAM" id="SSF53271">
    <property type="entry name" value="PRTase-like"/>
    <property type="match status" value="2"/>
</dbReference>
<dbReference type="PROSITE" id="PS00114">
    <property type="entry name" value="PRPP_SYNTHASE"/>
    <property type="match status" value="1"/>
</dbReference>
<evidence type="ECO:0000255" key="1">
    <source>
        <dbReference type="HAMAP-Rule" id="MF_00583"/>
    </source>
</evidence>
<reference key="1">
    <citation type="journal article" date="2002" name="Proc. Natl. Acad. Sci. U.S.A.">
        <title>Complete genome sequence and comparative genomic analysis of an emerging human pathogen, serotype V Streptococcus agalactiae.</title>
        <authorList>
            <person name="Tettelin H."/>
            <person name="Masignani V."/>
            <person name="Cieslewicz M.J."/>
            <person name="Eisen J.A."/>
            <person name="Peterson S.N."/>
            <person name="Wessels M.R."/>
            <person name="Paulsen I.T."/>
            <person name="Nelson K.E."/>
            <person name="Margarit I."/>
            <person name="Read T.D."/>
            <person name="Madoff L.C."/>
            <person name="Wolf A.M."/>
            <person name="Beanan M.J."/>
            <person name="Brinkac L.M."/>
            <person name="Daugherty S.C."/>
            <person name="DeBoy R.T."/>
            <person name="Durkin A.S."/>
            <person name="Kolonay J.F."/>
            <person name="Madupu R."/>
            <person name="Lewis M.R."/>
            <person name="Radune D."/>
            <person name="Fedorova N.B."/>
            <person name="Scanlan D."/>
            <person name="Khouri H.M."/>
            <person name="Mulligan S."/>
            <person name="Carty H.A."/>
            <person name="Cline R.T."/>
            <person name="Van Aken S.E."/>
            <person name="Gill J."/>
            <person name="Scarselli M."/>
            <person name="Mora M."/>
            <person name="Iacobini E.T."/>
            <person name="Brettoni C."/>
            <person name="Galli G."/>
            <person name="Mariani M."/>
            <person name="Vegni F."/>
            <person name="Maione D."/>
            <person name="Rinaudo D."/>
            <person name="Rappuoli R."/>
            <person name="Telford J.L."/>
            <person name="Kasper D.L."/>
            <person name="Grandi G."/>
            <person name="Fraser C.M."/>
        </authorList>
    </citation>
    <scope>NUCLEOTIDE SEQUENCE [LARGE SCALE GENOMIC DNA]</scope>
    <source>
        <strain>ATCC BAA-611 / 2603 V/R</strain>
    </source>
</reference>
<feature type="chain" id="PRO_0000141199" description="Putative ribose-phosphate pyrophosphokinase 2">
    <location>
        <begin position="1"/>
        <end position="324"/>
    </location>
</feature>
<feature type="binding site" evidence="1">
    <location>
        <begin position="43"/>
        <end position="45"/>
    </location>
    <ligand>
        <name>ATP</name>
        <dbReference type="ChEBI" id="CHEBI:30616"/>
    </ligand>
</feature>
<feature type="binding site" evidence="1">
    <location>
        <begin position="102"/>
        <end position="103"/>
    </location>
    <ligand>
        <name>ATP</name>
        <dbReference type="ChEBI" id="CHEBI:30616"/>
    </ligand>
</feature>
<feature type="binding site" evidence="1">
    <location>
        <position position="136"/>
    </location>
    <ligand>
        <name>Mg(2+)</name>
        <dbReference type="ChEBI" id="CHEBI:18420"/>
    </ligand>
</feature>
<feature type="binding site" evidence="1">
    <location>
        <position position="225"/>
    </location>
    <ligand>
        <name>D-ribose 5-phosphate</name>
        <dbReference type="ChEBI" id="CHEBI:78346"/>
    </ligand>
</feature>
<feature type="binding site" evidence="1">
    <location>
        <begin position="229"/>
        <end position="233"/>
    </location>
    <ligand>
        <name>D-ribose 5-phosphate</name>
        <dbReference type="ChEBI" id="CHEBI:78346"/>
    </ligand>
</feature>
<organism>
    <name type="scientific">Streptococcus agalactiae serotype V (strain ATCC BAA-611 / 2603 V/R)</name>
    <dbReference type="NCBI Taxonomy" id="208435"/>
    <lineage>
        <taxon>Bacteria</taxon>
        <taxon>Bacillati</taxon>
        <taxon>Bacillota</taxon>
        <taxon>Bacilli</taxon>
        <taxon>Lactobacillales</taxon>
        <taxon>Streptococcaceae</taxon>
        <taxon>Streptococcus</taxon>
    </lineage>
</organism>
<keyword id="KW-0067">ATP-binding</keyword>
<keyword id="KW-0963">Cytoplasm</keyword>
<keyword id="KW-0418">Kinase</keyword>
<keyword id="KW-0460">Magnesium</keyword>
<keyword id="KW-0479">Metal-binding</keyword>
<keyword id="KW-0545">Nucleotide biosynthesis</keyword>
<keyword id="KW-0547">Nucleotide-binding</keyword>
<keyword id="KW-1185">Reference proteome</keyword>
<keyword id="KW-0808">Transferase</keyword>
<protein>
    <recommendedName>
        <fullName evidence="1">Putative ribose-phosphate pyrophosphokinase 2</fullName>
        <shortName evidence="1">RPPK 2</shortName>
        <ecNumber evidence="1">2.7.6.1</ecNumber>
    </recommendedName>
    <alternativeName>
        <fullName evidence="1">5-phospho-D-ribosyl alpha-1-diphosphate synthase 2</fullName>
    </alternativeName>
    <alternativeName>
        <fullName evidence="1">Phosphoribosyl diphosphate synthase 2</fullName>
    </alternativeName>
    <alternativeName>
        <fullName evidence="1">Phosphoribosyl pyrophosphate synthase 2</fullName>
        <shortName evidence="1">P-Rib-PP synthase 2</shortName>
        <shortName evidence="1">PRPP synthase 2</shortName>
        <shortName evidence="1">PRPPase 2</shortName>
    </alternativeName>
</protein>
<comment type="function">
    <text evidence="1">Involved in the biosynthesis of the central metabolite phospho-alpha-D-ribosyl-1-pyrophosphate (PRPP) via the transfer of pyrophosphoryl group from ATP to 1-hydroxyl of ribose-5-phosphate (Rib-5-P).</text>
</comment>
<comment type="catalytic activity">
    <reaction evidence="1">
        <text>D-ribose 5-phosphate + ATP = 5-phospho-alpha-D-ribose 1-diphosphate + AMP + H(+)</text>
        <dbReference type="Rhea" id="RHEA:15609"/>
        <dbReference type="ChEBI" id="CHEBI:15378"/>
        <dbReference type="ChEBI" id="CHEBI:30616"/>
        <dbReference type="ChEBI" id="CHEBI:58017"/>
        <dbReference type="ChEBI" id="CHEBI:78346"/>
        <dbReference type="ChEBI" id="CHEBI:456215"/>
        <dbReference type="EC" id="2.7.6.1"/>
    </reaction>
</comment>
<comment type="cofactor">
    <cofactor evidence="1">
        <name>Mg(2+)</name>
        <dbReference type="ChEBI" id="CHEBI:18420"/>
    </cofactor>
    <text evidence="1">Binds 1 Mg(2+) ion per subunit.</text>
</comment>
<comment type="pathway">
    <text evidence="1">Metabolic intermediate biosynthesis; 5-phospho-alpha-D-ribose 1-diphosphate biosynthesis; 5-phospho-alpha-D-ribose 1-diphosphate from D-ribose 5-phosphate (route I): step 1/1.</text>
</comment>
<comment type="subunit">
    <text evidence="1">Homohexamer.</text>
</comment>
<comment type="subcellular location">
    <subcellularLocation>
        <location evidence="1">Cytoplasm</location>
    </subcellularLocation>
</comment>
<comment type="similarity">
    <text evidence="1">Belongs to the ribose-phosphate pyrophosphokinase family. Class I subfamily.</text>
</comment>
<comment type="caution">
    <text evidence="1">Part of a set of proteins in which some residues (ACT_SITE, NP_BIND, REGION and BINDING) are not conserved.</text>
</comment>
<gene>
    <name evidence="1" type="primary">prs2</name>
    <name type="synonym">prsA-2</name>
    <name type="ordered locus">SAG1097</name>
</gene>
<proteinExistence type="inferred from homology"/>
<name>KPRS2_STRA5</name>